<name>EPA4A_XENLA</name>
<evidence type="ECO:0000250" key="1"/>
<evidence type="ECO:0000250" key="2">
    <source>
        <dbReference type="UniProtKB" id="Q03137"/>
    </source>
</evidence>
<evidence type="ECO:0000255" key="3"/>
<evidence type="ECO:0000255" key="4">
    <source>
        <dbReference type="PROSITE-ProRule" id="PRU00159"/>
    </source>
</evidence>
<evidence type="ECO:0000255" key="5">
    <source>
        <dbReference type="PROSITE-ProRule" id="PRU00184"/>
    </source>
</evidence>
<evidence type="ECO:0000255" key="6">
    <source>
        <dbReference type="PROSITE-ProRule" id="PRU00316"/>
    </source>
</evidence>
<evidence type="ECO:0000255" key="7">
    <source>
        <dbReference type="PROSITE-ProRule" id="PRU00883"/>
    </source>
</evidence>
<evidence type="ECO:0000255" key="8">
    <source>
        <dbReference type="PROSITE-ProRule" id="PRU10028"/>
    </source>
</evidence>
<evidence type="ECO:0000269" key="9">
    <source>
    </source>
</evidence>
<organism>
    <name type="scientific">Xenopus laevis</name>
    <name type="common">African clawed frog</name>
    <dbReference type="NCBI Taxonomy" id="8355"/>
    <lineage>
        <taxon>Eukaryota</taxon>
        <taxon>Metazoa</taxon>
        <taxon>Chordata</taxon>
        <taxon>Craniata</taxon>
        <taxon>Vertebrata</taxon>
        <taxon>Euteleostomi</taxon>
        <taxon>Amphibia</taxon>
        <taxon>Batrachia</taxon>
        <taxon>Anura</taxon>
        <taxon>Pipoidea</taxon>
        <taxon>Pipidae</taxon>
        <taxon>Xenopodinae</taxon>
        <taxon>Xenopus</taxon>
        <taxon>Xenopus</taxon>
    </lineage>
</organism>
<accession>Q91845</accession>
<proteinExistence type="evidence at transcript level"/>
<gene>
    <name type="primary">epha4-a</name>
    <name type="synonym">sek1</name>
</gene>
<keyword id="KW-0067">ATP-binding</keyword>
<keyword id="KW-0130">Cell adhesion</keyword>
<keyword id="KW-1003">Cell membrane</keyword>
<keyword id="KW-0217">Developmental protein</keyword>
<keyword id="KW-0967">Endosome</keyword>
<keyword id="KW-0325">Glycoprotein</keyword>
<keyword id="KW-0418">Kinase</keyword>
<keyword id="KW-0472">Membrane</keyword>
<keyword id="KW-0524">Neurogenesis</keyword>
<keyword id="KW-0547">Nucleotide-binding</keyword>
<keyword id="KW-0597">Phosphoprotein</keyword>
<keyword id="KW-0675">Receptor</keyword>
<keyword id="KW-1185">Reference proteome</keyword>
<keyword id="KW-0677">Repeat</keyword>
<keyword id="KW-0732">Signal</keyword>
<keyword id="KW-0808">Transferase</keyword>
<keyword id="KW-0812">Transmembrane</keyword>
<keyword id="KW-1133">Transmembrane helix</keyword>
<keyword id="KW-0829">Tyrosine-protein kinase</keyword>
<reference key="1">
    <citation type="journal article" date="1995" name="Development">
        <title>Expression of truncated Sek-1 receptor tyrosine kinase disrupts the segmental restriction of gene expression in the Xenopus and zebrafish hindbrain.</title>
        <authorList>
            <person name="Xu Q."/>
            <person name="Alldus G."/>
            <person name="Holder N."/>
            <person name="Wilkinson D.G."/>
        </authorList>
    </citation>
    <scope>NUCLEOTIDE SEQUENCE [MRNA]</scope>
    <scope>DEVELOPMENTAL STAGE</scope>
</reference>
<sequence length="986" mass="109841">MAGIVHGILFCGLFGLCWAVTGSRIYPASEVTLLDSRSVQGELGWIASPLEGGWEEVSIMDEKNTPIRTYQVCNVMESSQNNWLRTDWIPRSGAQRVYVEIKFTLRDCNSLPGVMGTCKETFNLYYYESNNDKERFIRETQYVKIDTIAADESFTQVDIGDRIMKLNTEVRDVGPLSKKGFYLAFQDVGACIALVSVRVFYKKCPLTVRNLAQFPDTITGSDTSSLVEVRGSCVDNSEEKDVPKMYCGADGEWLVPIGNCLCNAGFEEHNGGCQACKVGYYKALSTDAACSKCPPHSYALREGSTSCTCDRGYFRADTDPASMPCTRPPSAPQNLISNVNETSVNLEWSPPQNSGGRPDVSYNLVCKRCGSDLTRCRPCGSGVHYSPQQNGLKTTKVSITDLQAHTNYTFEVWSINGVSKQNPGQDQAVSVTVTTNQAAPSTVTQIQPKDITRHSVSLTWPEPERPNGVILEYEVKYYEKDQNERTYRIVKTTSRSADIKGLNPLTAYVFHVRARTAAGYGEFSGPFEFTTNTVPSPMIGEGASPTVLLVSVAGSIVLVVILIAAFVISRRRSKYSKAKQEADEEKHLNQGVKTYVDPFTYEDPNQAVREFAKEIDASCIKIEKVIGVGEFGEVCSGRLKVPGKREIYVAIKTLKAGYTDKQRRDFLSEASIMGQFDHPNIIHLEGVVTKCKPVMIITEYMENGSLDAFLRKNDGRFTVIQLVGILRGIGSGMKYLSDMSYVHRDLAARNILVNSNLVCKVSDFGMSRVLEDDPEAAYTTRGGKIPIRWTAPEAIAYRKFTSASDVWSYGIVMWEVMSYGERPYWDMSNQDVIKAIEEGYRLPPPMDCPIALHQLMLDCWQKERSDRPKFGQIVSMLDKLIRNPNSLKRTGLDNSSRTNTTLLDPSSPEWSQVASVLDWLQAIKMERYKDNFTAAGYTSLEAVVHVNQDDLTRIGISSPSHQNKILSSVQGMRTQMQQIQGRMVPV</sequence>
<dbReference type="EC" id="2.7.10.1"/>
<dbReference type="EMBL" id="X91191">
    <property type="protein sequence ID" value="CAA62601.1"/>
    <property type="molecule type" value="mRNA"/>
</dbReference>
<dbReference type="RefSeq" id="NP_001090183.1">
    <property type="nucleotide sequence ID" value="NM_001096714.1"/>
</dbReference>
<dbReference type="SMR" id="Q91845"/>
<dbReference type="GlyCosmos" id="Q91845">
    <property type="glycosylation" value="2 sites, No reported glycans"/>
</dbReference>
<dbReference type="GeneID" id="779062"/>
<dbReference type="KEGG" id="xla:779062"/>
<dbReference type="AGR" id="Xenbase:XB-GENE-6253098"/>
<dbReference type="CTD" id="779062"/>
<dbReference type="Xenbase" id="XB-GENE-6253098">
    <property type="gene designation" value="epha4.S"/>
</dbReference>
<dbReference type="OrthoDB" id="4062651at2759"/>
<dbReference type="BRENDA" id="2.7.10.1">
    <property type="organism ID" value="6725"/>
</dbReference>
<dbReference type="Proteomes" id="UP000186698">
    <property type="component" value="Chromosome 5S"/>
</dbReference>
<dbReference type="Bgee" id="779062">
    <property type="expression patterns" value="Expressed in gastrula and 17 other cell types or tissues"/>
</dbReference>
<dbReference type="GO" id="GO:0030425">
    <property type="term" value="C:dendrite"/>
    <property type="evidence" value="ECO:0000318"/>
    <property type="project" value="GO_Central"/>
</dbReference>
<dbReference type="GO" id="GO:0031901">
    <property type="term" value="C:early endosome membrane"/>
    <property type="evidence" value="ECO:0000250"/>
    <property type="project" value="UniProtKB"/>
</dbReference>
<dbReference type="GO" id="GO:0005886">
    <property type="term" value="C:plasma membrane"/>
    <property type="evidence" value="ECO:0000250"/>
    <property type="project" value="UniProtKB"/>
</dbReference>
<dbReference type="GO" id="GO:0005524">
    <property type="term" value="F:ATP binding"/>
    <property type="evidence" value="ECO:0007669"/>
    <property type="project" value="UniProtKB-KW"/>
</dbReference>
<dbReference type="GO" id="GO:0005004">
    <property type="term" value="F:GPI-linked ephrin receptor activity"/>
    <property type="evidence" value="ECO:0000250"/>
    <property type="project" value="UniProtKB"/>
</dbReference>
<dbReference type="GO" id="GO:0005005">
    <property type="term" value="F:transmembrane-ephrin receptor activity"/>
    <property type="evidence" value="ECO:0000250"/>
    <property type="project" value="UniProtKB"/>
</dbReference>
<dbReference type="GO" id="GO:0007411">
    <property type="term" value="P:axon guidance"/>
    <property type="evidence" value="ECO:0000318"/>
    <property type="project" value="GO_Central"/>
</dbReference>
<dbReference type="GO" id="GO:0007155">
    <property type="term" value="P:cell adhesion"/>
    <property type="evidence" value="ECO:0007669"/>
    <property type="project" value="UniProtKB-KW"/>
</dbReference>
<dbReference type="GO" id="GO:0048013">
    <property type="term" value="P:ephrin receptor signaling pathway"/>
    <property type="evidence" value="ECO:0000318"/>
    <property type="project" value="GO_Central"/>
</dbReference>
<dbReference type="GO" id="GO:0043087">
    <property type="term" value="P:regulation of GTPase activity"/>
    <property type="evidence" value="ECO:0000250"/>
    <property type="project" value="UniProtKB"/>
</dbReference>
<dbReference type="CDD" id="cd10482">
    <property type="entry name" value="EphR_LBD_A4"/>
    <property type="match status" value="1"/>
</dbReference>
<dbReference type="CDD" id="cd00063">
    <property type="entry name" value="FN3"/>
    <property type="match status" value="2"/>
</dbReference>
<dbReference type="CDD" id="cd05066">
    <property type="entry name" value="PTKc_EphR_A"/>
    <property type="match status" value="1"/>
</dbReference>
<dbReference type="CDD" id="cd09545">
    <property type="entry name" value="SAM_EPH-A4"/>
    <property type="match status" value="1"/>
</dbReference>
<dbReference type="FunFam" id="2.60.40.10:FF:000041">
    <property type="entry name" value="ephrin type-A receptor 3"/>
    <property type="match status" value="1"/>
</dbReference>
<dbReference type="FunFam" id="1.10.150.50:FF:000001">
    <property type="entry name" value="Ephrin type-A receptor 5"/>
    <property type="match status" value="1"/>
</dbReference>
<dbReference type="FunFam" id="1.10.510.10:FF:000019">
    <property type="entry name" value="Ephrin type-A receptor 5"/>
    <property type="match status" value="1"/>
</dbReference>
<dbReference type="FunFam" id="2.10.50.10:FF:000001">
    <property type="entry name" value="Ephrin type-A receptor 5"/>
    <property type="match status" value="1"/>
</dbReference>
<dbReference type="FunFam" id="2.60.40.10:FF:000045">
    <property type="entry name" value="Ephrin type-A receptor 5"/>
    <property type="match status" value="1"/>
</dbReference>
<dbReference type="FunFam" id="2.60.40.1770:FF:000001">
    <property type="entry name" value="Ephrin type-A receptor 5"/>
    <property type="match status" value="1"/>
</dbReference>
<dbReference type="FunFam" id="3.30.200.20:FF:000001">
    <property type="entry name" value="Ephrin type-A receptor 5"/>
    <property type="match status" value="1"/>
</dbReference>
<dbReference type="FunFam" id="2.60.120.260:FF:000001">
    <property type="entry name" value="Ephrin type-A receptor 7"/>
    <property type="match status" value="1"/>
</dbReference>
<dbReference type="Gene3D" id="2.60.40.1770">
    <property type="entry name" value="ephrin a2 ectodomain"/>
    <property type="match status" value="1"/>
</dbReference>
<dbReference type="Gene3D" id="2.60.120.260">
    <property type="entry name" value="Galactose-binding domain-like"/>
    <property type="match status" value="1"/>
</dbReference>
<dbReference type="Gene3D" id="2.60.40.10">
    <property type="entry name" value="Immunoglobulins"/>
    <property type="match status" value="2"/>
</dbReference>
<dbReference type="Gene3D" id="3.30.200.20">
    <property type="entry name" value="Phosphorylase Kinase, domain 1"/>
    <property type="match status" value="1"/>
</dbReference>
<dbReference type="Gene3D" id="1.10.150.50">
    <property type="entry name" value="Transcription Factor, Ets-1"/>
    <property type="match status" value="1"/>
</dbReference>
<dbReference type="Gene3D" id="1.10.510.10">
    <property type="entry name" value="Transferase(Phosphotransferase) domain 1"/>
    <property type="match status" value="1"/>
</dbReference>
<dbReference type="Gene3D" id="2.10.50.10">
    <property type="entry name" value="Tumor Necrosis Factor Receptor, subunit A, domain 2"/>
    <property type="match status" value="1"/>
</dbReference>
<dbReference type="InterPro" id="IPR027936">
    <property type="entry name" value="Eph_TM"/>
</dbReference>
<dbReference type="InterPro" id="IPR034270">
    <property type="entry name" value="EphA4_rcpt_lig-bd"/>
</dbReference>
<dbReference type="InterPro" id="IPR030602">
    <property type="entry name" value="EphA4_SAM"/>
</dbReference>
<dbReference type="InterPro" id="IPR001090">
    <property type="entry name" value="Ephrin_rcpt_lig-bd_dom"/>
</dbReference>
<dbReference type="InterPro" id="IPR050449">
    <property type="entry name" value="Ephrin_rcpt_TKs"/>
</dbReference>
<dbReference type="InterPro" id="IPR003961">
    <property type="entry name" value="FN3_dom"/>
</dbReference>
<dbReference type="InterPro" id="IPR036116">
    <property type="entry name" value="FN3_sf"/>
</dbReference>
<dbReference type="InterPro" id="IPR008979">
    <property type="entry name" value="Galactose-bd-like_sf"/>
</dbReference>
<dbReference type="InterPro" id="IPR009030">
    <property type="entry name" value="Growth_fac_rcpt_cys_sf"/>
</dbReference>
<dbReference type="InterPro" id="IPR013783">
    <property type="entry name" value="Ig-like_fold"/>
</dbReference>
<dbReference type="InterPro" id="IPR011009">
    <property type="entry name" value="Kinase-like_dom_sf"/>
</dbReference>
<dbReference type="InterPro" id="IPR000719">
    <property type="entry name" value="Prot_kinase_dom"/>
</dbReference>
<dbReference type="InterPro" id="IPR017441">
    <property type="entry name" value="Protein_kinase_ATP_BS"/>
</dbReference>
<dbReference type="InterPro" id="IPR001660">
    <property type="entry name" value="SAM"/>
</dbReference>
<dbReference type="InterPro" id="IPR013761">
    <property type="entry name" value="SAM/pointed_sf"/>
</dbReference>
<dbReference type="InterPro" id="IPR001245">
    <property type="entry name" value="Ser-Thr/Tyr_kinase_cat_dom"/>
</dbReference>
<dbReference type="InterPro" id="IPR008266">
    <property type="entry name" value="Tyr_kinase_AS"/>
</dbReference>
<dbReference type="InterPro" id="IPR020635">
    <property type="entry name" value="Tyr_kinase_cat_dom"/>
</dbReference>
<dbReference type="InterPro" id="IPR016257">
    <property type="entry name" value="Tyr_kinase_ephrin_rcpt"/>
</dbReference>
<dbReference type="InterPro" id="IPR001426">
    <property type="entry name" value="Tyr_kinase_rcpt_V_CS"/>
</dbReference>
<dbReference type="PANTHER" id="PTHR46877">
    <property type="entry name" value="EPH RECEPTOR A5"/>
    <property type="match status" value="1"/>
</dbReference>
<dbReference type="PANTHER" id="PTHR46877:SF18">
    <property type="entry name" value="EPHRIN TYPE-A RECEPTOR 4"/>
    <property type="match status" value="1"/>
</dbReference>
<dbReference type="Pfam" id="PF14575">
    <property type="entry name" value="EphA2_TM"/>
    <property type="match status" value="1"/>
</dbReference>
<dbReference type="Pfam" id="PF01404">
    <property type="entry name" value="Ephrin_lbd"/>
    <property type="match status" value="1"/>
</dbReference>
<dbReference type="Pfam" id="PF00041">
    <property type="entry name" value="fn3"/>
    <property type="match status" value="2"/>
</dbReference>
<dbReference type="Pfam" id="PF07714">
    <property type="entry name" value="PK_Tyr_Ser-Thr"/>
    <property type="match status" value="1"/>
</dbReference>
<dbReference type="Pfam" id="PF07647">
    <property type="entry name" value="SAM_2"/>
    <property type="match status" value="1"/>
</dbReference>
<dbReference type="PIRSF" id="PIRSF000666">
    <property type="entry name" value="TyrPK_ephrin_receptor"/>
    <property type="match status" value="1"/>
</dbReference>
<dbReference type="PRINTS" id="PR00014">
    <property type="entry name" value="FNTYPEIII"/>
</dbReference>
<dbReference type="PRINTS" id="PR00109">
    <property type="entry name" value="TYRKINASE"/>
</dbReference>
<dbReference type="SMART" id="SM00615">
    <property type="entry name" value="EPH_lbd"/>
    <property type="match status" value="1"/>
</dbReference>
<dbReference type="SMART" id="SM01411">
    <property type="entry name" value="Ephrin_rec_like"/>
    <property type="match status" value="1"/>
</dbReference>
<dbReference type="SMART" id="SM00060">
    <property type="entry name" value="FN3"/>
    <property type="match status" value="2"/>
</dbReference>
<dbReference type="SMART" id="SM00220">
    <property type="entry name" value="S_TKc"/>
    <property type="match status" value="1"/>
</dbReference>
<dbReference type="SMART" id="SM00454">
    <property type="entry name" value="SAM"/>
    <property type="match status" value="1"/>
</dbReference>
<dbReference type="SMART" id="SM00219">
    <property type="entry name" value="TyrKc"/>
    <property type="match status" value="1"/>
</dbReference>
<dbReference type="SUPFAM" id="SSF49265">
    <property type="entry name" value="Fibronectin type III"/>
    <property type="match status" value="1"/>
</dbReference>
<dbReference type="SUPFAM" id="SSF49785">
    <property type="entry name" value="Galactose-binding domain-like"/>
    <property type="match status" value="1"/>
</dbReference>
<dbReference type="SUPFAM" id="SSF57184">
    <property type="entry name" value="Growth factor receptor domain"/>
    <property type="match status" value="1"/>
</dbReference>
<dbReference type="SUPFAM" id="SSF56112">
    <property type="entry name" value="Protein kinase-like (PK-like)"/>
    <property type="match status" value="1"/>
</dbReference>
<dbReference type="SUPFAM" id="SSF47769">
    <property type="entry name" value="SAM/Pointed domain"/>
    <property type="match status" value="1"/>
</dbReference>
<dbReference type="PROSITE" id="PS01186">
    <property type="entry name" value="EGF_2"/>
    <property type="match status" value="1"/>
</dbReference>
<dbReference type="PROSITE" id="PS51550">
    <property type="entry name" value="EPH_LBD"/>
    <property type="match status" value="1"/>
</dbReference>
<dbReference type="PROSITE" id="PS50853">
    <property type="entry name" value="FN3"/>
    <property type="match status" value="2"/>
</dbReference>
<dbReference type="PROSITE" id="PS00107">
    <property type="entry name" value="PROTEIN_KINASE_ATP"/>
    <property type="match status" value="1"/>
</dbReference>
<dbReference type="PROSITE" id="PS50011">
    <property type="entry name" value="PROTEIN_KINASE_DOM"/>
    <property type="match status" value="1"/>
</dbReference>
<dbReference type="PROSITE" id="PS00109">
    <property type="entry name" value="PROTEIN_KINASE_TYR"/>
    <property type="match status" value="1"/>
</dbReference>
<dbReference type="PROSITE" id="PS00790">
    <property type="entry name" value="RECEPTOR_TYR_KIN_V_1"/>
    <property type="match status" value="1"/>
</dbReference>
<dbReference type="PROSITE" id="PS00791">
    <property type="entry name" value="RECEPTOR_TYR_KIN_V_2"/>
    <property type="match status" value="1"/>
</dbReference>
<dbReference type="PROSITE" id="PS50105">
    <property type="entry name" value="SAM_DOMAIN"/>
    <property type="match status" value="1"/>
</dbReference>
<feature type="signal peptide" evidence="3">
    <location>
        <begin position="1"/>
        <end position="20"/>
    </location>
</feature>
<feature type="chain" id="PRO_0000016810" description="Ephrin type-A receptor 4-A">
    <location>
        <begin position="21"/>
        <end position="986"/>
    </location>
</feature>
<feature type="topological domain" description="Extracellular" evidence="3">
    <location>
        <begin position="21"/>
        <end position="547"/>
    </location>
</feature>
<feature type="transmembrane region" description="Helical" evidence="3">
    <location>
        <begin position="548"/>
        <end position="569"/>
    </location>
</feature>
<feature type="topological domain" description="Cytoplasmic" evidence="3">
    <location>
        <begin position="570"/>
        <end position="986"/>
    </location>
</feature>
<feature type="domain" description="Eph LBD" evidence="7">
    <location>
        <begin position="30"/>
        <end position="209"/>
    </location>
</feature>
<feature type="domain" description="Fibronectin type-III 1" evidence="6">
    <location>
        <begin position="328"/>
        <end position="438"/>
    </location>
</feature>
<feature type="domain" description="Fibronectin type-III 2" evidence="6">
    <location>
        <begin position="439"/>
        <end position="536"/>
    </location>
</feature>
<feature type="domain" description="Protein kinase" evidence="4">
    <location>
        <begin position="620"/>
        <end position="881"/>
    </location>
</feature>
<feature type="domain" description="SAM" evidence="5">
    <location>
        <begin position="911"/>
        <end position="975"/>
    </location>
</feature>
<feature type="short sequence motif" description="PDZ-binding" evidence="3">
    <location>
        <begin position="984"/>
        <end position="986"/>
    </location>
</feature>
<feature type="active site" description="Proton acceptor" evidence="4 8">
    <location>
        <position position="745"/>
    </location>
</feature>
<feature type="binding site" evidence="4">
    <location>
        <begin position="626"/>
        <end position="634"/>
    </location>
    <ligand>
        <name>ATP</name>
        <dbReference type="ChEBI" id="CHEBI:30616"/>
    </ligand>
</feature>
<feature type="binding site" evidence="4">
    <location>
        <position position="652"/>
    </location>
    <ligand>
        <name>ATP</name>
        <dbReference type="ChEBI" id="CHEBI:30616"/>
    </ligand>
</feature>
<feature type="modified residue" description="Phosphotyrosine; by autocatalysis" evidence="1">
    <location>
        <position position="595"/>
    </location>
</feature>
<feature type="modified residue" description="Phosphotyrosine; by autocatalysis" evidence="1">
    <location>
        <position position="601"/>
    </location>
</feature>
<feature type="modified residue" description="Phosphotyrosine; by autocatalysis" evidence="3">
    <location>
        <position position="778"/>
    </location>
</feature>
<feature type="modified residue" description="Phosphotyrosine; by autocatalysis" evidence="3">
    <location>
        <position position="928"/>
    </location>
</feature>
<feature type="glycosylation site" description="N-linked (GlcNAc...) asparagine" evidence="3">
    <location>
        <position position="340"/>
    </location>
</feature>
<feature type="glycosylation site" description="N-linked (GlcNAc...) asparagine" evidence="3">
    <location>
        <position position="407"/>
    </location>
</feature>
<protein>
    <recommendedName>
        <fullName>Ephrin type-A receptor 4-A</fullName>
        <ecNumber>2.7.10.1</ecNumber>
    </recommendedName>
    <alternativeName>
        <fullName>Tyrosine-protein kinase receptor SEK-1</fullName>
        <shortName>xSEK-1</shortName>
    </alternativeName>
</protein>
<comment type="function">
    <text evidence="2">Receptor tyrosine kinase which binds membrane-bound ephrin family ligands residing on adjacent cells, leading to contact-dependent bidirectional signaling into neighboring cells. The signaling pathway downstream of the receptor is referred to as forward signaling while the signaling pathway downstream of the ephrin ligand is referred to as reverse signaling. Highly promiscuous, it has the unique property among Eph receptors to bind and to be physiologically activated by both GPI-anchored ephrin-A and transmembrane ephrin-B ligands including EFNA1 and EFNB3. Upon activation by ephrin ligands, modulates cell morphology and integrin-dependent cell adhesion through regulation of the Rac, Rap and Rho GTPases activity. Plays an important role in the development of the nervous system controlling different steps of axonal guidance including the establishment of the corticospinal projections (By similarity).</text>
</comment>
<comment type="catalytic activity">
    <reaction evidence="8">
        <text>L-tyrosyl-[protein] + ATP = O-phospho-L-tyrosyl-[protein] + ADP + H(+)</text>
        <dbReference type="Rhea" id="RHEA:10596"/>
        <dbReference type="Rhea" id="RHEA-COMP:10136"/>
        <dbReference type="Rhea" id="RHEA-COMP:20101"/>
        <dbReference type="ChEBI" id="CHEBI:15378"/>
        <dbReference type="ChEBI" id="CHEBI:30616"/>
        <dbReference type="ChEBI" id="CHEBI:46858"/>
        <dbReference type="ChEBI" id="CHEBI:61978"/>
        <dbReference type="ChEBI" id="CHEBI:456216"/>
        <dbReference type="EC" id="2.7.10.1"/>
    </reaction>
</comment>
<comment type="subcellular location">
    <subcellularLocation>
        <location evidence="2">Cell membrane</location>
        <topology evidence="2">Single-pass type I membrane protein</topology>
    </subcellularLocation>
    <subcellularLocation>
        <location evidence="2">Early endosome</location>
    </subcellularLocation>
    <text evidence="2">Clustered upon activation and targeted to early endosome.</text>
</comment>
<comment type="developmental stage">
    <text evidence="9">Expression occurs in R3, R5 and transiently at lower levels in R2.</text>
</comment>
<comment type="similarity">
    <text evidence="4">Belongs to the protein kinase superfamily. Tyr protein kinase family. Ephrin receptor subfamily.</text>
</comment>